<gene>
    <name type="ordered locus">RP012</name>
</gene>
<name>Y012_RICPR</name>
<reference key="1">
    <citation type="journal article" date="1998" name="Nature">
        <title>The genome sequence of Rickettsia prowazekii and the origin of mitochondria.</title>
        <authorList>
            <person name="Andersson S.G.E."/>
            <person name="Zomorodipour A."/>
            <person name="Andersson J.O."/>
            <person name="Sicheritz-Ponten T."/>
            <person name="Alsmark U.C.M."/>
            <person name="Podowski R.M."/>
            <person name="Naeslund A.K."/>
            <person name="Eriksson A.-S."/>
            <person name="Winkler H.H."/>
            <person name="Kurland C.G."/>
        </authorList>
    </citation>
    <scope>NUCLEOTIDE SEQUENCE [LARGE SCALE GENOMIC DNA]</scope>
    <source>
        <strain>Madrid E</strain>
    </source>
</reference>
<feature type="signal peptide" evidence="1">
    <location>
        <begin position="1"/>
        <end position="19"/>
    </location>
</feature>
<feature type="chain" id="PRO_0000014220" description="Uncharacterized protein RP012">
    <location>
        <begin position="20"/>
        <end position="357"/>
    </location>
</feature>
<accession>Q9ZED1</accession>
<sequence length="357" mass="41036">MKRILSFIFIILFFNSSYAVEKAAIITDYKPIFLPVITENKKIKIAIRSYLKNKKSYFVLVDPNSFKTEIVLQELVILPANKIEKENLLIKLNKTSYIKALNKYNFIDQSLQSFKQDEFSNKFTDNTIVYEHKLNSKSSHSSTFMNSTVQQNYGATSSMYKVKGQFLTIDMCPSSKNFEEVFFKKLVELSTKLKKAIPITICVSGLWINKHTEEFLWLLKQQENGYLQITWVNHSFSHPYFKDKPLEDNFLLSNKDDFENEVLEVGKILVSYNIAPSPFFRFPGLVSDQTLIAKLKNFGFIPLGSNAWLAKGEKIQDGSFILVHGNSNEKAGIDLIMPMLSELKLLPIEKAFLPTNL</sequence>
<organism>
    <name type="scientific">Rickettsia prowazekii (strain Madrid E)</name>
    <dbReference type="NCBI Taxonomy" id="272947"/>
    <lineage>
        <taxon>Bacteria</taxon>
        <taxon>Pseudomonadati</taxon>
        <taxon>Pseudomonadota</taxon>
        <taxon>Alphaproteobacteria</taxon>
        <taxon>Rickettsiales</taxon>
        <taxon>Rickettsiaceae</taxon>
        <taxon>Rickettsieae</taxon>
        <taxon>Rickettsia</taxon>
        <taxon>typhus group</taxon>
    </lineage>
</organism>
<evidence type="ECO:0000255" key="1"/>
<dbReference type="EMBL" id="AJ235270">
    <property type="protein sequence ID" value="CAA14484.1"/>
    <property type="molecule type" value="Genomic_DNA"/>
</dbReference>
<dbReference type="PIR" id="E71708">
    <property type="entry name" value="E71708"/>
</dbReference>
<dbReference type="RefSeq" id="NP_220407.1">
    <property type="nucleotide sequence ID" value="NC_000963.1"/>
</dbReference>
<dbReference type="RefSeq" id="WP_010886190.1">
    <property type="nucleotide sequence ID" value="NC_000963.1"/>
</dbReference>
<dbReference type="SMR" id="Q9ZED1"/>
<dbReference type="STRING" id="272947.gene:17555095"/>
<dbReference type="EnsemblBacteria" id="CAA14484">
    <property type="protein sequence ID" value="CAA14484"/>
    <property type="gene ID" value="CAA14484"/>
</dbReference>
<dbReference type="KEGG" id="rpr:RP012"/>
<dbReference type="PATRIC" id="fig|272947.5.peg.12"/>
<dbReference type="eggNOG" id="COG0726">
    <property type="taxonomic scope" value="Bacteria"/>
</dbReference>
<dbReference type="HOGENOM" id="CLU_078784_0_0_5"/>
<dbReference type="OrthoDB" id="1331280at2"/>
<dbReference type="Proteomes" id="UP000002480">
    <property type="component" value="Chromosome"/>
</dbReference>
<dbReference type="GO" id="GO:0005975">
    <property type="term" value="P:carbohydrate metabolic process"/>
    <property type="evidence" value="ECO:0007669"/>
    <property type="project" value="InterPro"/>
</dbReference>
<dbReference type="CDD" id="cd10963">
    <property type="entry name" value="CE4_RC0012_like"/>
    <property type="match status" value="1"/>
</dbReference>
<dbReference type="Gene3D" id="3.20.20.370">
    <property type="entry name" value="Glycoside hydrolase/deacetylase"/>
    <property type="match status" value="1"/>
</dbReference>
<dbReference type="InterPro" id="IPR011330">
    <property type="entry name" value="Glyco_hydro/deAcase_b/a-brl"/>
</dbReference>
<dbReference type="InterPro" id="IPR022437">
    <property type="entry name" value="RPE3"/>
</dbReference>
<dbReference type="NCBIfam" id="TIGR03775">
    <property type="entry name" value="RPE3"/>
    <property type="match status" value="1"/>
</dbReference>
<dbReference type="SUPFAM" id="SSF88713">
    <property type="entry name" value="Glycoside hydrolase/deacetylase"/>
    <property type="match status" value="1"/>
</dbReference>
<protein>
    <recommendedName>
        <fullName>Uncharacterized protein RP012</fullName>
    </recommendedName>
</protein>
<keyword id="KW-1185">Reference proteome</keyword>
<keyword id="KW-0732">Signal</keyword>
<proteinExistence type="inferred from homology"/>